<accession>B0TZM4</accession>
<comment type="function">
    <text evidence="1">Catalyzes the last two sequential reactions in the de novo biosynthetic pathway for UDP-N-acetylglucosamine (UDP-GlcNAc). The C-terminal domain catalyzes the transfer of acetyl group from acetyl coenzyme A to glucosamine-1-phosphate (GlcN-1-P) to produce N-acetylglucosamine-1-phosphate (GlcNAc-1-P), which is converted into UDP-GlcNAc by the transfer of uridine 5-monophosphate (from uridine 5-triphosphate), a reaction catalyzed by the N-terminal domain.</text>
</comment>
<comment type="catalytic activity">
    <reaction evidence="1">
        <text>alpha-D-glucosamine 1-phosphate + acetyl-CoA = N-acetyl-alpha-D-glucosamine 1-phosphate + CoA + H(+)</text>
        <dbReference type="Rhea" id="RHEA:13725"/>
        <dbReference type="ChEBI" id="CHEBI:15378"/>
        <dbReference type="ChEBI" id="CHEBI:57287"/>
        <dbReference type="ChEBI" id="CHEBI:57288"/>
        <dbReference type="ChEBI" id="CHEBI:57776"/>
        <dbReference type="ChEBI" id="CHEBI:58516"/>
        <dbReference type="EC" id="2.3.1.157"/>
    </reaction>
</comment>
<comment type="catalytic activity">
    <reaction evidence="1">
        <text>N-acetyl-alpha-D-glucosamine 1-phosphate + UTP + H(+) = UDP-N-acetyl-alpha-D-glucosamine + diphosphate</text>
        <dbReference type="Rhea" id="RHEA:13509"/>
        <dbReference type="ChEBI" id="CHEBI:15378"/>
        <dbReference type="ChEBI" id="CHEBI:33019"/>
        <dbReference type="ChEBI" id="CHEBI:46398"/>
        <dbReference type="ChEBI" id="CHEBI:57705"/>
        <dbReference type="ChEBI" id="CHEBI:57776"/>
        <dbReference type="EC" id="2.7.7.23"/>
    </reaction>
</comment>
<comment type="cofactor">
    <cofactor evidence="1">
        <name>Mg(2+)</name>
        <dbReference type="ChEBI" id="CHEBI:18420"/>
    </cofactor>
    <text evidence="1">Binds 1 Mg(2+) ion per subunit.</text>
</comment>
<comment type="pathway">
    <text evidence="1">Nucleotide-sugar biosynthesis; UDP-N-acetyl-alpha-D-glucosamine biosynthesis; N-acetyl-alpha-D-glucosamine 1-phosphate from alpha-D-glucosamine 6-phosphate (route II): step 2/2.</text>
</comment>
<comment type="pathway">
    <text evidence="1">Nucleotide-sugar biosynthesis; UDP-N-acetyl-alpha-D-glucosamine biosynthesis; UDP-N-acetyl-alpha-D-glucosamine from N-acetyl-alpha-D-glucosamine 1-phosphate: step 1/1.</text>
</comment>
<comment type="pathway">
    <text evidence="1">Bacterial outer membrane biogenesis; LPS lipid A biosynthesis.</text>
</comment>
<comment type="subunit">
    <text evidence="1">Homotrimer.</text>
</comment>
<comment type="subcellular location">
    <subcellularLocation>
        <location evidence="1">Cytoplasm</location>
    </subcellularLocation>
</comment>
<comment type="similarity">
    <text evidence="1">In the N-terminal section; belongs to the N-acetylglucosamine-1-phosphate uridyltransferase family.</text>
</comment>
<comment type="similarity">
    <text evidence="1">In the C-terminal section; belongs to the transferase hexapeptide repeat family.</text>
</comment>
<evidence type="ECO:0000255" key="1">
    <source>
        <dbReference type="HAMAP-Rule" id="MF_01631"/>
    </source>
</evidence>
<sequence length="451" mass="48698">MSLAVVILAAGKGSRMNSNKPKVLQTLTGKTLIRHVLSRVEPLNPDNIIVVTGHLKEMVEADLADKKVTFVEQKEQLGTGHAVLQALPYIKEDKVLILYGDVPLISTDVLANLIKSASDDLAVLTAIVDNPTGLGRIIRDKFGAVSHIVEEKDATDGQRQIKEINTGMYCVAKSHLDDWLPNLGNTNAQGEYYLTDIVAMARGDNISITVTHPVEEFEIQGVNDRIQLAQLEREWQKHIAEVIMSKGVSVADPSRIDVRGKLEVGKDCWLDINVIIKGHVKLGNNVVIGANCILKNCTIEDNVKIKANSMVDGSIIREGAIVGPFARVRPECDVKEGAVIGNFVEAKKTILGRGSKASHLTYLGDSEIGANCNIGAGVITCNYDGVNKHKTTIGDYAFIGSDSQLIAPVNIGSGATIGAGSTIVSDVPADNLAISRARQRHIDTWQRPVKK</sequence>
<gene>
    <name evidence="1" type="primary">glmU</name>
    <name type="ordered locus">Fphi_0366</name>
</gene>
<dbReference type="EC" id="2.7.7.23" evidence="1"/>
<dbReference type="EC" id="2.3.1.157" evidence="1"/>
<dbReference type="EMBL" id="CP000937">
    <property type="protein sequence ID" value="ABZ86583.1"/>
    <property type="molecule type" value="Genomic_DNA"/>
</dbReference>
<dbReference type="SMR" id="B0TZM4"/>
<dbReference type="KEGG" id="fph:Fphi_0366"/>
<dbReference type="eggNOG" id="COG1207">
    <property type="taxonomic scope" value="Bacteria"/>
</dbReference>
<dbReference type="HOGENOM" id="CLU_029499_15_2_6"/>
<dbReference type="UniPathway" id="UPA00113">
    <property type="reaction ID" value="UER00532"/>
</dbReference>
<dbReference type="UniPathway" id="UPA00113">
    <property type="reaction ID" value="UER00533"/>
</dbReference>
<dbReference type="UniPathway" id="UPA00973"/>
<dbReference type="GO" id="GO:0005737">
    <property type="term" value="C:cytoplasm"/>
    <property type="evidence" value="ECO:0007669"/>
    <property type="project" value="UniProtKB-SubCell"/>
</dbReference>
<dbReference type="GO" id="GO:0016020">
    <property type="term" value="C:membrane"/>
    <property type="evidence" value="ECO:0007669"/>
    <property type="project" value="GOC"/>
</dbReference>
<dbReference type="GO" id="GO:0019134">
    <property type="term" value="F:glucosamine-1-phosphate N-acetyltransferase activity"/>
    <property type="evidence" value="ECO:0007669"/>
    <property type="project" value="UniProtKB-UniRule"/>
</dbReference>
<dbReference type="GO" id="GO:0000287">
    <property type="term" value="F:magnesium ion binding"/>
    <property type="evidence" value="ECO:0007669"/>
    <property type="project" value="UniProtKB-UniRule"/>
</dbReference>
<dbReference type="GO" id="GO:0003977">
    <property type="term" value="F:UDP-N-acetylglucosamine diphosphorylase activity"/>
    <property type="evidence" value="ECO:0007669"/>
    <property type="project" value="UniProtKB-UniRule"/>
</dbReference>
<dbReference type="GO" id="GO:0000902">
    <property type="term" value="P:cell morphogenesis"/>
    <property type="evidence" value="ECO:0007669"/>
    <property type="project" value="UniProtKB-UniRule"/>
</dbReference>
<dbReference type="GO" id="GO:0071555">
    <property type="term" value="P:cell wall organization"/>
    <property type="evidence" value="ECO:0007669"/>
    <property type="project" value="UniProtKB-KW"/>
</dbReference>
<dbReference type="GO" id="GO:0009245">
    <property type="term" value="P:lipid A biosynthetic process"/>
    <property type="evidence" value="ECO:0007669"/>
    <property type="project" value="UniProtKB-UniRule"/>
</dbReference>
<dbReference type="GO" id="GO:0009252">
    <property type="term" value="P:peptidoglycan biosynthetic process"/>
    <property type="evidence" value="ECO:0007669"/>
    <property type="project" value="UniProtKB-UniRule"/>
</dbReference>
<dbReference type="GO" id="GO:0008360">
    <property type="term" value="P:regulation of cell shape"/>
    <property type="evidence" value="ECO:0007669"/>
    <property type="project" value="UniProtKB-KW"/>
</dbReference>
<dbReference type="GO" id="GO:0006048">
    <property type="term" value="P:UDP-N-acetylglucosamine biosynthetic process"/>
    <property type="evidence" value="ECO:0007669"/>
    <property type="project" value="UniProtKB-UniPathway"/>
</dbReference>
<dbReference type="CDD" id="cd02540">
    <property type="entry name" value="GT2_GlmU_N_bac"/>
    <property type="match status" value="1"/>
</dbReference>
<dbReference type="CDD" id="cd03353">
    <property type="entry name" value="LbH_GlmU_C"/>
    <property type="match status" value="1"/>
</dbReference>
<dbReference type="Gene3D" id="2.160.10.10">
    <property type="entry name" value="Hexapeptide repeat proteins"/>
    <property type="match status" value="1"/>
</dbReference>
<dbReference type="Gene3D" id="3.90.550.10">
    <property type="entry name" value="Spore Coat Polysaccharide Biosynthesis Protein SpsA, Chain A"/>
    <property type="match status" value="1"/>
</dbReference>
<dbReference type="HAMAP" id="MF_01631">
    <property type="entry name" value="GlmU"/>
    <property type="match status" value="1"/>
</dbReference>
<dbReference type="InterPro" id="IPR005882">
    <property type="entry name" value="Bifunctional_GlmU"/>
</dbReference>
<dbReference type="InterPro" id="IPR050065">
    <property type="entry name" value="GlmU-like"/>
</dbReference>
<dbReference type="InterPro" id="IPR038009">
    <property type="entry name" value="GlmU_C_LbH"/>
</dbReference>
<dbReference type="InterPro" id="IPR001451">
    <property type="entry name" value="Hexapep"/>
</dbReference>
<dbReference type="InterPro" id="IPR018357">
    <property type="entry name" value="Hexapep_transf_CS"/>
</dbReference>
<dbReference type="InterPro" id="IPR025877">
    <property type="entry name" value="MobA-like_NTP_Trfase"/>
</dbReference>
<dbReference type="InterPro" id="IPR029044">
    <property type="entry name" value="Nucleotide-diphossugar_trans"/>
</dbReference>
<dbReference type="InterPro" id="IPR011004">
    <property type="entry name" value="Trimer_LpxA-like_sf"/>
</dbReference>
<dbReference type="NCBIfam" id="TIGR01173">
    <property type="entry name" value="glmU"/>
    <property type="match status" value="1"/>
</dbReference>
<dbReference type="PANTHER" id="PTHR43584:SF3">
    <property type="entry name" value="BIFUNCTIONAL PROTEIN GLMU"/>
    <property type="match status" value="1"/>
</dbReference>
<dbReference type="PANTHER" id="PTHR43584">
    <property type="entry name" value="NUCLEOTIDYL TRANSFERASE"/>
    <property type="match status" value="1"/>
</dbReference>
<dbReference type="Pfam" id="PF00132">
    <property type="entry name" value="Hexapep"/>
    <property type="match status" value="2"/>
</dbReference>
<dbReference type="Pfam" id="PF12804">
    <property type="entry name" value="NTP_transf_3"/>
    <property type="match status" value="1"/>
</dbReference>
<dbReference type="SUPFAM" id="SSF53448">
    <property type="entry name" value="Nucleotide-diphospho-sugar transferases"/>
    <property type="match status" value="1"/>
</dbReference>
<dbReference type="SUPFAM" id="SSF51161">
    <property type="entry name" value="Trimeric LpxA-like enzymes"/>
    <property type="match status" value="1"/>
</dbReference>
<dbReference type="PROSITE" id="PS00101">
    <property type="entry name" value="HEXAPEP_TRANSFERASES"/>
    <property type="match status" value="1"/>
</dbReference>
<protein>
    <recommendedName>
        <fullName evidence="1">Bifunctional protein GlmU</fullName>
    </recommendedName>
    <domain>
        <recommendedName>
            <fullName evidence="1">UDP-N-acetylglucosamine pyrophosphorylase</fullName>
            <ecNumber evidence="1">2.7.7.23</ecNumber>
        </recommendedName>
        <alternativeName>
            <fullName evidence="1">N-acetylglucosamine-1-phosphate uridyltransferase</fullName>
        </alternativeName>
    </domain>
    <domain>
        <recommendedName>
            <fullName evidence="1">Glucosamine-1-phosphate N-acetyltransferase</fullName>
            <ecNumber evidence="1">2.3.1.157</ecNumber>
        </recommendedName>
    </domain>
</protein>
<name>GLMU_FRAP2</name>
<organism>
    <name type="scientific">Francisella philomiragia subsp. philomiragia (strain ATCC 25017 / CCUG 19701 / FSC 153 / O#319-036)</name>
    <dbReference type="NCBI Taxonomy" id="484022"/>
    <lineage>
        <taxon>Bacteria</taxon>
        <taxon>Pseudomonadati</taxon>
        <taxon>Pseudomonadota</taxon>
        <taxon>Gammaproteobacteria</taxon>
        <taxon>Thiotrichales</taxon>
        <taxon>Francisellaceae</taxon>
        <taxon>Francisella</taxon>
    </lineage>
</organism>
<feature type="chain" id="PRO_1000088132" description="Bifunctional protein GlmU">
    <location>
        <begin position="1"/>
        <end position="451"/>
    </location>
</feature>
<feature type="region of interest" description="Pyrophosphorylase" evidence="1">
    <location>
        <begin position="1"/>
        <end position="225"/>
    </location>
</feature>
<feature type="region of interest" description="Linker" evidence="1">
    <location>
        <begin position="226"/>
        <end position="246"/>
    </location>
</feature>
<feature type="region of interest" description="N-acetyltransferase" evidence="1">
    <location>
        <begin position="247"/>
        <end position="451"/>
    </location>
</feature>
<feature type="active site" description="Proton acceptor" evidence="1">
    <location>
        <position position="359"/>
    </location>
</feature>
<feature type="binding site" evidence="1">
    <location>
        <begin position="8"/>
        <end position="11"/>
    </location>
    <ligand>
        <name>UDP-N-acetyl-alpha-D-glucosamine</name>
        <dbReference type="ChEBI" id="CHEBI:57705"/>
    </ligand>
</feature>
<feature type="binding site" evidence="1">
    <location>
        <position position="22"/>
    </location>
    <ligand>
        <name>UDP-N-acetyl-alpha-D-glucosamine</name>
        <dbReference type="ChEBI" id="CHEBI:57705"/>
    </ligand>
</feature>
<feature type="binding site" evidence="1">
    <location>
        <position position="73"/>
    </location>
    <ligand>
        <name>UDP-N-acetyl-alpha-D-glucosamine</name>
        <dbReference type="ChEBI" id="CHEBI:57705"/>
    </ligand>
</feature>
<feature type="binding site" evidence="1">
    <location>
        <begin position="78"/>
        <end position="79"/>
    </location>
    <ligand>
        <name>UDP-N-acetyl-alpha-D-glucosamine</name>
        <dbReference type="ChEBI" id="CHEBI:57705"/>
    </ligand>
</feature>
<feature type="binding site" evidence="1">
    <location>
        <begin position="99"/>
        <end position="101"/>
    </location>
    <ligand>
        <name>UDP-N-acetyl-alpha-D-glucosamine</name>
        <dbReference type="ChEBI" id="CHEBI:57705"/>
    </ligand>
</feature>
<feature type="binding site" evidence="1">
    <location>
        <position position="101"/>
    </location>
    <ligand>
        <name>Mg(2+)</name>
        <dbReference type="ChEBI" id="CHEBI:18420"/>
    </ligand>
</feature>
<feature type="binding site" evidence="1">
    <location>
        <position position="135"/>
    </location>
    <ligand>
        <name>UDP-N-acetyl-alpha-D-glucosamine</name>
        <dbReference type="ChEBI" id="CHEBI:57705"/>
    </ligand>
</feature>
<feature type="binding site" evidence="1">
    <location>
        <position position="150"/>
    </location>
    <ligand>
        <name>UDP-N-acetyl-alpha-D-glucosamine</name>
        <dbReference type="ChEBI" id="CHEBI:57705"/>
    </ligand>
</feature>
<feature type="binding site" evidence="1">
    <location>
        <position position="165"/>
    </location>
    <ligand>
        <name>UDP-N-acetyl-alpha-D-glucosamine</name>
        <dbReference type="ChEBI" id="CHEBI:57705"/>
    </ligand>
</feature>
<feature type="binding site" evidence="1">
    <location>
        <position position="223"/>
    </location>
    <ligand>
        <name>Mg(2+)</name>
        <dbReference type="ChEBI" id="CHEBI:18420"/>
    </ligand>
</feature>
<feature type="binding site" evidence="1">
    <location>
        <position position="223"/>
    </location>
    <ligand>
        <name>UDP-N-acetyl-alpha-D-glucosamine</name>
        <dbReference type="ChEBI" id="CHEBI:57705"/>
    </ligand>
</feature>
<feature type="binding site" evidence="1">
    <location>
        <position position="329"/>
    </location>
    <ligand>
        <name>UDP-N-acetyl-alpha-D-glucosamine</name>
        <dbReference type="ChEBI" id="CHEBI:57705"/>
    </ligand>
</feature>
<feature type="binding site" evidence="1">
    <location>
        <position position="347"/>
    </location>
    <ligand>
        <name>UDP-N-acetyl-alpha-D-glucosamine</name>
        <dbReference type="ChEBI" id="CHEBI:57705"/>
    </ligand>
</feature>
<feature type="binding site" evidence="1">
    <location>
        <position position="362"/>
    </location>
    <ligand>
        <name>UDP-N-acetyl-alpha-D-glucosamine</name>
        <dbReference type="ChEBI" id="CHEBI:57705"/>
    </ligand>
</feature>
<feature type="binding site" evidence="1">
    <location>
        <position position="373"/>
    </location>
    <ligand>
        <name>UDP-N-acetyl-alpha-D-glucosamine</name>
        <dbReference type="ChEBI" id="CHEBI:57705"/>
    </ligand>
</feature>
<feature type="binding site" evidence="1">
    <location>
        <position position="376"/>
    </location>
    <ligand>
        <name>acetyl-CoA</name>
        <dbReference type="ChEBI" id="CHEBI:57288"/>
    </ligand>
</feature>
<feature type="binding site" evidence="1">
    <location>
        <begin position="382"/>
        <end position="383"/>
    </location>
    <ligand>
        <name>acetyl-CoA</name>
        <dbReference type="ChEBI" id="CHEBI:57288"/>
    </ligand>
</feature>
<feature type="binding site" evidence="1">
    <location>
        <position position="401"/>
    </location>
    <ligand>
        <name>acetyl-CoA</name>
        <dbReference type="ChEBI" id="CHEBI:57288"/>
    </ligand>
</feature>
<feature type="binding site" evidence="1">
    <location>
        <position position="419"/>
    </location>
    <ligand>
        <name>acetyl-CoA</name>
        <dbReference type="ChEBI" id="CHEBI:57288"/>
    </ligand>
</feature>
<feature type="binding site" evidence="1">
    <location>
        <position position="436"/>
    </location>
    <ligand>
        <name>acetyl-CoA</name>
        <dbReference type="ChEBI" id="CHEBI:57288"/>
    </ligand>
</feature>
<reference key="1">
    <citation type="submission" date="2007-12" db="EMBL/GenBank/DDBJ databases">
        <title>Complete sequence of chromosome of Francisella philomiragia subsp. philomiragia ATCC 25017.</title>
        <authorList>
            <consortium name="US DOE Joint Genome Institute"/>
            <person name="Copeland A."/>
            <person name="Lucas S."/>
            <person name="Lapidus A."/>
            <person name="Barry K."/>
            <person name="Detter J.C."/>
            <person name="Glavina del Rio T."/>
            <person name="Hammon N."/>
            <person name="Israni S."/>
            <person name="Dalin E."/>
            <person name="Tice H."/>
            <person name="Pitluck S."/>
            <person name="Chain P."/>
            <person name="Malfatti S."/>
            <person name="Shin M."/>
            <person name="Vergez L."/>
            <person name="Schmutz J."/>
            <person name="Larimer F."/>
            <person name="Land M."/>
            <person name="Hauser L."/>
            <person name="Richardson P."/>
        </authorList>
    </citation>
    <scope>NUCLEOTIDE SEQUENCE [LARGE SCALE GENOMIC DNA]</scope>
    <source>
        <strain>ATCC 25017 / CCUG 19701 / FSC 153 / O#319-036</strain>
    </source>
</reference>
<keyword id="KW-0012">Acyltransferase</keyword>
<keyword id="KW-0133">Cell shape</keyword>
<keyword id="KW-0961">Cell wall biogenesis/degradation</keyword>
<keyword id="KW-0963">Cytoplasm</keyword>
<keyword id="KW-0460">Magnesium</keyword>
<keyword id="KW-0479">Metal-binding</keyword>
<keyword id="KW-0511">Multifunctional enzyme</keyword>
<keyword id="KW-0548">Nucleotidyltransferase</keyword>
<keyword id="KW-0573">Peptidoglycan synthesis</keyword>
<keyword id="KW-0677">Repeat</keyword>
<keyword id="KW-0808">Transferase</keyword>
<proteinExistence type="inferred from homology"/>